<gene>
    <name evidence="1" type="primary">hemC</name>
    <name type="ordered locus">Ent638_3987</name>
</gene>
<proteinExistence type="inferred from homology"/>
<organism>
    <name type="scientific">Enterobacter sp. (strain 638)</name>
    <dbReference type="NCBI Taxonomy" id="399742"/>
    <lineage>
        <taxon>Bacteria</taxon>
        <taxon>Pseudomonadati</taxon>
        <taxon>Pseudomonadota</taxon>
        <taxon>Gammaproteobacteria</taxon>
        <taxon>Enterobacterales</taxon>
        <taxon>Enterobacteriaceae</taxon>
        <taxon>Enterobacter</taxon>
    </lineage>
</organism>
<dbReference type="EC" id="2.5.1.61" evidence="1"/>
<dbReference type="EMBL" id="CP000653">
    <property type="protein sequence ID" value="ABP62642.1"/>
    <property type="molecule type" value="Genomic_DNA"/>
</dbReference>
<dbReference type="RefSeq" id="WP_015960947.1">
    <property type="nucleotide sequence ID" value="NC_009436.1"/>
</dbReference>
<dbReference type="SMR" id="A4WG12"/>
<dbReference type="STRING" id="399742.Ent638_3987"/>
<dbReference type="KEGG" id="ent:Ent638_3987"/>
<dbReference type="eggNOG" id="COG0181">
    <property type="taxonomic scope" value="Bacteria"/>
</dbReference>
<dbReference type="HOGENOM" id="CLU_019704_0_2_6"/>
<dbReference type="OrthoDB" id="9810298at2"/>
<dbReference type="UniPathway" id="UPA00251">
    <property type="reaction ID" value="UER00319"/>
</dbReference>
<dbReference type="Proteomes" id="UP000000230">
    <property type="component" value="Chromosome"/>
</dbReference>
<dbReference type="GO" id="GO:0005737">
    <property type="term" value="C:cytoplasm"/>
    <property type="evidence" value="ECO:0007669"/>
    <property type="project" value="TreeGrafter"/>
</dbReference>
<dbReference type="GO" id="GO:0004418">
    <property type="term" value="F:hydroxymethylbilane synthase activity"/>
    <property type="evidence" value="ECO:0007669"/>
    <property type="project" value="UniProtKB-UniRule"/>
</dbReference>
<dbReference type="GO" id="GO:0006782">
    <property type="term" value="P:protoporphyrinogen IX biosynthetic process"/>
    <property type="evidence" value="ECO:0007669"/>
    <property type="project" value="UniProtKB-UniRule"/>
</dbReference>
<dbReference type="CDD" id="cd13646">
    <property type="entry name" value="PBP2_EcHMBS_like"/>
    <property type="match status" value="1"/>
</dbReference>
<dbReference type="FunFam" id="3.30.160.40:FF:000002">
    <property type="entry name" value="Porphobilinogen deaminase"/>
    <property type="match status" value="1"/>
</dbReference>
<dbReference type="FunFam" id="3.40.190.10:FF:000004">
    <property type="entry name" value="Porphobilinogen deaminase"/>
    <property type="match status" value="1"/>
</dbReference>
<dbReference type="FunFam" id="3.40.190.10:FF:000005">
    <property type="entry name" value="Porphobilinogen deaminase"/>
    <property type="match status" value="1"/>
</dbReference>
<dbReference type="Gene3D" id="3.40.190.10">
    <property type="entry name" value="Periplasmic binding protein-like II"/>
    <property type="match status" value="2"/>
</dbReference>
<dbReference type="Gene3D" id="3.30.160.40">
    <property type="entry name" value="Porphobilinogen deaminase, C-terminal domain"/>
    <property type="match status" value="1"/>
</dbReference>
<dbReference type="HAMAP" id="MF_00260">
    <property type="entry name" value="Porphobil_deam"/>
    <property type="match status" value="1"/>
</dbReference>
<dbReference type="InterPro" id="IPR000860">
    <property type="entry name" value="HemC"/>
</dbReference>
<dbReference type="InterPro" id="IPR022419">
    <property type="entry name" value="Porphobilin_deaminase_cofac_BS"/>
</dbReference>
<dbReference type="InterPro" id="IPR022417">
    <property type="entry name" value="Porphobilin_deaminase_N"/>
</dbReference>
<dbReference type="InterPro" id="IPR022418">
    <property type="entry name" value="Porphobilinogen_deaminase_C"/>
</dbReference>
<dbReference type="InterPro" id="IPR036803">
    <property type="entry name" value="Porphobilinogen_deaminase_C_sf"/>
</dbReference>
<dbReference type="NCBIfam" id="TIGR00212">
    <property type="entry name" value="hemC"/>
    <property type="match status" value="1"/>
</dbReference>
<dbReference type="PANTHER" id="PTHR11557">
    <property type="entry name" value="PORPHOBILINOGEN DEAMINASE"/>
    <property type="match status" value="1"/>
</dbReference>
<dbReference type="PANTHER" id="PTHR11557:SF0">
    <property type="entry name" value="PORPHOBILINOGEN DEAMINASE"/>
    <property type="match status" value="1"/>
</dbReference>
<dbReference type="Pfam" id="PF01379">
    <property type="entry name" value="Porphobil_deam"/>
    <property type="match status" value="1"/>
</dbReference>
<dbReference type="Pfam" id="PF03900">
    <property type="entry name" value="Porphobil_deamC"/>
    <property type="match status" value="1"/>
</dbReference>
<dbReference type="PIRSF" id="PIRSF001438">
    <property type="entry name" value="4pyrrol_synth_OHMeBilane_synth"/>
    <property type="match status" value="1"/>
</dbReference>
<dbReference type="PRINTS" id="PR00151">
    <property type="entry name" value="PORPHBDMNASE"/>
</dbReference>
<dbReference type="SUPFAM" id="SSF53850">
    <property type="entry name" value="Periplasmic binding protein-like II"/>
    <property type="match status" value="1"/>
</dbReference>
<dbReference type="SUPFAM" id="SSF54782">
    <property type="entry name" value="Porphobilinogen deaminase (hydroxymethylbilane synthase), C-terminal domain"/>
    <property type="match status" value="1"/>
</dbReference>
<dbReference type="PROSITE" id="PS00533">
    <property type="entry name" value="PORPHOBILINOGEN_DEAM"/>
    <property type="match status" value="1"/>
</dbReference>
<comment type="function">
    <text evidence="1">Tetrapolymerization of the monopyrrole PBG into the hydroxymethylbilane pre-uroporphyrinogen in several discrete steps.</text>
</comment>
<comment type="catalytic activity">
    <reaction evidence="1">
        <text>4 porphobilinogen + H2O = hydroxymethylbilane + 4 NH4(+)</text>
        <dbReference type="Rhea" id="RHEA:13185"/>
        <dbReference type="ChEBI" id="CHEBI:15377"/>
        <dbReference type="ChEBI" id="CHEBI:28938"/>
        <dbReference type="ChEBI" id="CHEBI:57845"/>
        <dbReference type="ChEBI" id="CHEBI:58126"/>
        <dbReference type="EC" id="2.5.1.61"/>
    </reaction>
</comment>
<comment type="cofactor">
    <cofactor evidence="1">
        <name>dipyrromethane</name>
        <dbReference type="ChEBI" id="CHEBI:60342"/>
    </cofactor>
    <text evidence="1">Binds 1 dipyrromethane group covalently.</text>
</comment>
<comment type="pathway">
    <text evidence="1">Porphyrin-containing compound metabolism; protoporphyrin-IX biosynthesis; coproporphyrinogen-III from 5-aminolevulinate: step 2/4.</text>
</comment>
<comment type="subunit">
    <text evidence="1">Monomer.</text>
</comment>
<comment type="miscellaneous">
    <text evidence="1">The porphobilinogen subunits are added to the dipyrromethane group.</text>
</comment>
<comment type="similarity">
    <text evidence="1">Belongs to the HMBS family.</text>
</comment>
<evidence type="ECO:0000255" key="1">
    <source>
        <dbReference type="HAMAP-Rule" id="MF_00260"/>
    </source>
</evidence>
<reference key="1">
    <citation type="journal article" date="2010" name="PLoS Genet.">
        <title>Genome sequence of the plant growth promoting endophytic bacterium Enterobacter sp. 638.</title>
        <authorList>
            <person name="Taghavi S."/>
            <person name="van der Lelie D."/>
            <person name="Hoffman A."/>
            <person name="Zhang Y.B."/>
            <person name="Walla M.D."/>
            <person name="Vangronsveld J."/>
            <person name="Newman L."/>
            <person name="Monchy S."/>
        </authorList>
    </citation>
    <scope>NUCLEOTIDE SEQUENCE [LARGE SCALE GENOMIC DNA]</scope>
    <source>
        <strain>638</strain>
    </source>
</reference>
<sequence length="313" mass="34121">MLDNVLRIATRQSPLALWQAQYVKQRLEACHQGLRVELVPMVTRGDVILDTPLAKVGGKGLFVKELEIALLENRADIAVHSMKDVPVEFPEGLGLVTICEREDPRDAFVSNRYASLDDLPKGSVVGTSSLRRQCQLAERRPDLVIRSLRGNVGTRLGKLDNGDYDAIILAVAGLKRLGLESRIRVAMPPELCLPAVGQGAVGIECRLDDDRTRALLSPLNHDETAIRVQAERAMNMRLEGGCQVPIGSYAELINGELWLRALVGAPDGSQMVRGERRGLPQDAEMLGISLADELLNNGARAILADVYNGEPPA</sequence>
<accession>A4WG12</accession>
<protein>
    <recommendedName>
        <fullName evidence="1">Porphobilinogen deaminase</fullName>
        <shortName evidence="1">PBG</shortName>
        <ecNumber evidence="1">2.5.1.61</ecNumber>
    </recommendedName>
    <alternativeName>
        <fullName evidence="1">Hydroxymethylbilane synthase</fullName>
        <shortName evidence="1">HMBS</shortName>
    </alternativeName>
    <alternativeName>
        <fullName evidence="1">Pre-uroporphyrinogen synthase</fullName>
    </alternativeName>
</protein>
<feature type="chain" id="PRO_1000059098" description="Porphobilinogen deaminase">
    <location>
        <begin position="1"/>
        <end position="313"/>
    </location>
</feature>
<feature type="modified residue" description="S-(dipyrrolylmethanemethyl)cysteine" evidence="1">
    <location>
        <position position="242"/>
    </location>
</feature>
<keyword id="KW-0627">Porphyrin biosynthesis</keyword>
<keyword id="KW-0808">Transferase</keyword>
<name>HEM3_ENT38</name>